<accession>Q9QUL0</accession>
<accession>Q9R0S7</accession>
<comment type="subcellular location">
    <subcellularLocation>
        <location evidence="1">Secreted</location>
    </subcellularLocation>
</comment>
<comment type="tissue specificity">
    <text evidence="3 4">Expressed exclusively in decidual tissue.</text>
</comment>
<comment type="developmental stage">
    <text evidence="3">Expression limited to early pregnancy with abundant expression on day 7, slightly declining expression on day 9, and no detectable expression by day 11.</text>
</comment>
<comment type="similarity">
    <text evidence="5">Belongs to the somatotropin/prolactin family.</text>
</comment>
<gene>
    <name type="primary">Prl3c1</name>
    <name type="synonym">Prlpi</name>
    <name type="synonym">Prlpj</name>
</gene>
<reference key="1">
    <citation type="journal article" date="1999" name="Biochem. Biophys. Res. Commun.">
        <title>Identification of four members of the rat prolactin/growth hormone gene family.</title>
        <authorList>
            <person name="Ishibashi K."/>
            <person name="Imai M."/>
        </authorList>
    </citation>
    <scope>NUCLEOTIDE SEQUENCE [MRNA]</scope>
</reference>
<reference key="2">
    <citation type="journal article" date="1999" name="Biochim. Biophys. Acta">
        <title>PLP-I: a novel prolactin-like gene in rodents.</title>
        <authorList>
            <person name="Hiraoka Y."/>
            <person name="Ogawa M."/>
            <person name="Sakai Y."/>
            <person name="Takeuchi Y."/>
            <person name="Komatsu N."/>
            <person name="Shiozawa M."/>
            <person name="Tanabe K."/>
            <person name="Aiso S."/>
        </authorList>
    </citation>
    <scope>NUCLEOTIDE SEQUENCE [MRNA]</scope>
    <source>
        <strain>Sprague-Dawley</strain>
    </source>
</reference>
<reference key="3">
    <citation type="journal article" date="1999" name="Endocrinology">
        <title>Prolactin (PRL)-like protein J, a novel member of the PRL/growth hormone family, is exclusively expressed in maternal decidua.</title>
        <authorList>
            <person name="Toft D.J."/>
            <person name="Linzer D.I."/>
        </authorList>
    </citation>
    <scope>NUCLEOTIDE SEQUENCE [MRNA]</scope>
    <scope>TISSUE SPECIFICITY</scope>
    <scope>DEVELOPMENTAL STAGE</scope>
</reference>
<reference key="4">
    <citation type="journal article" date="2000" name="J. Endocrinol.">
        <title>Three novel paralogs of the rodent prolactin gene family.</title>
        <authorList>
            <person name="Dai G."/>
            <person name="Wang D."/>
            <person name="Liu B."/>
            <person name="Kasik J.W."/>
            <person name="Mueller H."/>
            <person name="White R.A."/>
            <person name="Hummel G.S."/>
            <person name="Soares M.J."/>
        </authorList>
    </citation>
    <scope>NUCLEOTIDE SEQUENCE [MRNA]</scope>
    <scope>TISSUE SPECIFICITY</scope>
</reference>
<keyword id="KW-1015">Disulfide bond</keyword>
<keyword id="KW-0325">Glycoprotein</keyword>
<keyword id="KW-0372">Hormone</keyword>
<keyword id="KW-1185">Reference proteome</keyword>
<keyword id="KW-0964">Secreted</keyword>
<keyword id="KW-0732">Signal</keyword>
<name>PR3C1_RAT</name>
<protein>
    <recommendedName>
        <fullName>Prolactin-3C1</fullName>
    </recommendedName>
    <alternativeName>
        <fullName>Decidualin</fullName>
    </alternativeName>
    <alternativeName>
        <fullName>Placental prolactin-like protein J</fullName>
        <shortName>PLP-J</shortName>
        <shortName>PRL-like protein J</shortName>
    </alternativeName>
    <alternativeName>
        <fullName>Prolactin-like protein I</fullName>
        <shortName>PLP-I</shortName>
        <shortName>PRL-like protein I</shortName>
    </alternativeName>
</protein>
<organism>
    <name type="scientific">Rattus norvegicus</name>
    <name type="common">Rat</name>
    <dbReference type="NCBI Taxonomy" id="10116"/>
    <lineage>
        <taxon>Eukaryota</taxon>
        <taxon>Metazoa</taxon>
        <taxon>Chordata</taxon>
        <taxon>Craniata</taxon>
        <taxon>Vertebrata</taxon>
        <taxon>Euteleostomi</taxon>
        <taxon>Mammalia</taxon>
        <taxon>Eutheria</taxon>
        <taxon>Euarchontoglires</taxon>
        <taxon>Glires</taxon>
        <taxon>Rodentia</taxon>
        <taxon>Myomorpha</taxon>
        <taxon>Muroidea</taxon>
        <taxon>Muridae</taxon>
        <taxon>Murinae</taxon>
        <taxon>Rattus</taxon>
    </lineage>
</organism>
<proteinExistence type="evidence at transcript level"/>
<dbReference type="EMBL" id="AB019945">
    <property type="protein sequence ID" value="BAA83729.1"/>
    <property type="molecule type" value="mRNA"/>
</dbReference>
<dbReference type="EMBL" id="AB019119">
    <property type="protein sequence ID" value="BAA85989.1"/>
    <property type="molecule type" value="mRNA"/>
</dbReference>
<dbReference type="EMBL" id="AF150741">
    <property type="protein sequence ID" value="AAF13036.1"/>
    <property type="molecule type" value="mRNA"/>
</dbReference>
<dbReference type="EMBL" id="AF234638">
    <property type="protein sequence ID" value="AAF40437.1"/>
    <property type="molecule type" value="mRNA"/>
</dbReference>
<dbReference type="RefSeq" id="NP_112606.1">
    <property type="nucleotide sequence ID" value="NM_031316.1"/>
</dbReference>
<dbReference type="SMR" id="Q9QUL0"/>
<dbReference type="STRING" id="10116.ENSRNOP00000069973"/>
<dbReference type="GlyCosmos" id="Q9QUL0">
    <property type="glycosylation" value="2 sites, No reported glycans"/>
</dbReference>
<dbReference type="GlyGen" id="Q9QUL0">
    <property type="glycosylation" value="2 sites"/>
</dbReference>
<dbReference type="iPTMnet" id="Q9QUL0"/>
<dbReference type="PhosphoSitePlus" id="Q9QUL0"/>
<dbReference type="PaxDb" id="10116-ENSRNOP00000023166"/>
<dbReference type="GeneID" id="58937"/>
<dbReference type="KEGG" id="rno:58937"/>
<dbReference type="UCSC" id="RGD:69341">
    <property type="organism name" value="rat"/>
</dbReference>
<dbReference type="AGR" id="RGD:69341"/>
<dbReference type="CTD" id="27372"/>
<dbReference type="RGD" id="69341">
    <property type="gene designation" value="Prl3c1"/>
</dbReference>
<dbReference type="eggNOG" id="ENOG502QYU3">
    <property type="taxonomic scope" value="Eukaryota"/>
</dbReference>
<dbReference type="HOGENOM" id="CLU_088274_0_1_1"/>
<dbReference type="InParanoid" id="Q9QUL0"/>
<dbReference type="OrthoDB" id="9606338at2759"/>
<dbReference type="PhylomeDB" id="Q9QUL0"/>
<dbReference type="TreeFam" id="TF332592"/>
<dbReference type="PRO" id="PR:Q9QUL0"/>
<dbReference type="Proteomes" id="UP000002494">
    <property type="component" value="Chromosome 17"/>
</dbReference>
<dbReference type="Bgee" id="ENSRNOG00000017203">
    <property type="expression patterns" value="Expressed in testis"/>
</dbReference>
<dbReference type="ExpressionAtlas" id="Q9QUL0">
    <property type="expression patterns" value="differential"/>
</dbReference>
<dbReference type="GO" id="GO:0005615">
    <property type="term" value="C:extracellular space"/>
    <property type="evidence" value="ECO:0000318"/>
    <property type="project" value="GO_Central"/>
</dbReference>
<dbReference type="GO" id="GO:0005179">
    <property type="term" value="F:hormone activity"/>
    <property type="evidence" value="ECO:0000318"/>
    <property type="project" value="GO_Central"/>
</dbReference>
<dbReference type="GO" id="GO:0005148">
    <property type="term" value="F:prolactin receptor binding"/>
    <property type="evidence" value="ECO:0000318"/>
    <property type="project" value="GO_Central"/>
</dbReference>
<dbReference type="GO" id="GO:0007166">
    <property type="term" value="P:cell surface receptor signaling pathway"/>
    <property type="evidence" value="ECO:0000318"/>
    <property type="project" value="GO_Central"/>
</dbReference>
<dbReference type="GO" id="GO:0007565">
    <property type="term" value="P:female pregnancy"/>
    <property type="evidence" value="ECO:0000318"/>
    <property type="project" value="GO_Central"/>
</dbReference>
<dbReference type="GO" id="GO:0030879">
    <property type="term" value="P:mammary gland development"/>
    <property type="evidence" value="ECO:0000318"/>
    <property type="project" value="GO_Central"/>
</dbReference>
<dbReference type="GO" id="GO:1903489">
    <property type="term" value="P:positive regulation of lactation"/>
    <property type="evidence" value="ECO:0000318"/>
    <property type="project" value="GO_Central"/>
</dbReference>
<dbReference type="GO" id="GO:0046427">
    <property type="term" value="P:positive regulation of receptor signaling pathway via JAK-STAT"/>
    <property type="evidence" value="ECO:0000318"/>
    <property type="project" value="GO_Central"/>
</dbReference>
<dbReference type="GO" id="GO:0031667">
    <property type="term" value="P:response to nutrient levels"/>
    <property type="evidence" value="ECO:0000318"/>
    <property type="project" value="GO_Central"/>
</dbReference>
<dbReference type="CDD" id="cd10288">
    <property type="entry name" value="prolactin_like"/>
    <property type="match status" value="1"/>
</dbReference>
<dbReference type="Gene3D" id="1.20.1250.10">
    <property type="match status" value="1"/>
</dbReference>
<dbReference type="InterPro" id="IPR009079">
    <property type="entry name" value="4_helix_cytokine-like_core"/>
</dbReference>
<dbReference type="InterPro" id="IPR001400">
    <property type="entry name" value="Somatotropin/Prolactin"/>
</dbReference>
<dbReference type="PANTHER" id="PTHR11417:SF34">
    <property type="entry name" value="PROLACTIN-3C1"/>
    <property type="match status" value="1"/>
</dbReference>
<dbReference type="PANTHER" id="PTHR11417">
    <property type="entry name" value="SOMATOTROPIN,PROLACTIN"/>
    <property type="match status" value="1"/>
</dbReference>
<dbReference type="Pfam" id="PF00103">
    <property type="entry name" value="Hormone_1"/>
    <property type="match status" value="1"/>
</dbReference>
<dbReference type="SUPFAM" id="SSF47266">
    <property type="entry name" value="4-helical cytokines"/>
    <property type="match status" value="1"/>
</dbReference>
<evidence type="ECO:0000250" key="1"/>
<evidence type="ECO:0000255" key="2"/>
<evidence type="ECO:0000269" key="3">
    <source>
    </source>
</evidence>
<evidence type="ECO:0000269" key="4">
    <source>
    </source>
</evidence>
<evidence type="ECO:0000305" key="5"/>
<feature type="signal peptide" evidence="2">
    <location>
        <begin position="1"/>
        <end position="29"/>
    </location>
</feature>
<feature type="chain" id="PRO_0000045277" description="Prolactin-3C1">
    <location>
        <begin position="30"/>
        <end position="211"/>
    </location>
</feature>
<feature type="glycosylation site" description="N-linked (GlcNAc...) asparagine" evidence="2">
    <location>
        <position position="77"/>
    </location>
</feature>
<feature type="glycosylation site" description="N-linked (GlcNAc...) asparagine" evidence="2">
    <location>
        <position position="173"/>
    </location>
</feature>
<feature type="disulfide bond" evidence="1">
    <location>
        <begin position="80"/>
        <end position="187"/>
    </location>
</feature>
<feature type="sequence conflict" description="In Ref. 1; BAA83729 and 4; AAF40437." evidence="5" ref="1 4">
    <original>N</original>
    <variation>H</variation>
    <location>
        <position position="91"/>
    </location>
</feature>
<sequence length="211" mass="24575">MQLSLTQARTWKGLLLLVSCMILWISVTPTPYDQMSNEELYDNLLSCSHRTHVVARKMYKILDLNVAERRCFKNKRNNTCHTTSTHTAKTNEDLLKVIISVSNAWIYPLKMLIPAVLTHLGSYDGMMARAIELNYGNQKILEGAKFLLSRIQPGIEENDYPVWSSLKELRSSNKSIHLFAFCKFFYCLRKDTKKIKDYLQILRPNIIKNKW</sequence>